<name>EFTS1_TRYCC</name>
<organism>
    <name type="scientific">Trypanosoma cruzi (strain CL Brener)</name>
    <dbReference type="NCBI Taxonomy" id="353153"/>
    <lineage>
        <taxon>Eukaryota</taxon>
        <taxon>Discoba</taxon>
        <taxon>Euglenozoa</taxon>
        <taxon>Kinetoplastea</taxon>
        <taxon>Metakinetoplastina</taxon>
        <taxon>Trypanosomatida</taxon>
        <taxon>Trypanosomatidae</taxon>
        <taxon>Trypanosoma</taxon>
        <taxon>Schizotrypanum</taxon>
    </lineage>
</organism>
<feature type="chain" id="PRO_0000402339" description="Elongation factor Ts 1, mitochondrial">
    <location>
        <begin position="1"/>
        <end position="278"/>
    </location>
</feature>
<sequence>MLCLTRLRANVNKVAFMEMVKDLRFRTEAPIAECGAALKETHGDVEKAMEVLRKKGAARAMKKRSRVTEHGSVVACVGGLFGAAVITVCSETDFAARSAQFQNTCARVKVALQRKIIDSKGDVLTNPTEAHRSLVEATAEDIRSSIAVLGENVTIKSVESLRLAPHVAEHISIGSYTHGSLDVPDVGRIAGVVAVSRLDPTKEVQASTLTDVARHFVASSGAEGNYAHQNFFGTEETVGQWLKRHGLCFSSSLVVDFGKEPITHTASQPRNAVKHPEG</sequence>
<protein>
    <recommendedName>
        <fullName>Elongation factor Ts 1, mitochondrial</fullName>
        <shortName evidence="1">EF-Ts 1</shortName>
        <shortName evidence="1">EF-TsMt 1</shortName>
    </recommendedName>
</protein>
<keyword id="KW-0251">Elongation factor</keyword>
<keyword id="KW-0496">Mitochondrion</keyword>
<keyword id="KW-0648">Protein biosynthesis</keyword>
<keyword id="KW-1185">Reference proteome</keyword>
<dbReference type="EMBL" id="AAHK01001186">
    <property type="protein sequence ID" value="EAN86602.1"/>
    <property type="molecule type" value="Genomic_DNA"/>
</dbReference>
<dbReference type="RefSeq" id="XP_808453.1">
    <property type="nucleotide sequence ID" value="XM_803360.1"/>
</dbReference>
<dbReference type="SMR" id="Q4D248"/>
<dbReference type="STRING" id="353153.Q4D248"/>
<dbReference type="PaxDb" id="353153-Q4D248"/>
<dbReference type="EnsemblProtists" id="EAN86602">
    <property type="protein sequence ID" value="EAN86602"/>
    <property type="gene ID" value="Tc00.1047053503811.60"/>
</dbReference>
<dbReference type="GeneID" id="3538866"/>
<dbReference type="KEGG" id="tcr:503811.60"/>
<dbReference type="eggNOG" id="KOG1071">
    <property type="taxonomic scope" value="Eukaryota"/>
</dbReference>
<dbReference type="InParanoid" id="Q4D248"/>
<dbReference type="Proteomes" id="UP000002296">
    <property type="component" value="Unassembled WGS sequence"/>
</dbReference>
<dbReference type="GO" id="GO:0005739">
    <property type="term" value="C:mitochondrion"/>
    <property type="evidence" value="ECO:0007669"/>
    <property type="project" value="UniProtKB-SubCell"/>
</dbReference>
<dbReference type="GO" id="GO:0003746">
    <property type="term" value="F:translation elongation factor activity"/>
    <property type="evidence" value="ECO:0007669"/>
    <property type="project" value="UniProtKB-UniRule"/>
</dbReference>
<dbReference type="GO" id="GO:0070125">
    <property type="term" value="P:mitochondrial translational elongation"/>
    <property type="evidence" value="ECO:0007669"/>
    <property type="project" value="TreeGrafter"/>
</dbReference>
<dbReference type="FunFam" id="1.10.8.10:FF:000001">
    <property type="entry name" value="Elongation factor Ts"/>
    <property type="match status" value="1"/>
</dbReference>
<dbReference type="Gene3D" id="1.10.8.10">
    <property type="entry name" value="DNA helicase RuvA subunit, C-terminal domain"/>
    <property type="match status" value="1"/>
</dbReference>
<dbReference type="Gene3D" id="3.30.479.20">
    <property type="entry name" value="Elongation factor Ts, dimerisation domain"/>
    <property type="match status" value="1"/>
</dbReference>
<dbReference type="HAMAP" id="MF_00050">
    <property type="entry name" value="EF_Ts"/>
    <property type="match status" value="1"/>
</dbReference>
<dbReference type="InterPro" id="IPR036402">
    <property type="entry name" value="EF-Ts_dimer_sf"/>
</dbReference>
<dbReference type="InterPro" id="IPR001816">
    <property type="entry name" value="Transl_elong_EFTs/EF1B"/>
</dbReference>
<dbReference type="InterPro" id="IPR014039">
    <property type="entry name" value="Transl_elong_EFTs/EF1B_dimer"/>
</dbReference>
<dbReference type="InterPro" id="IPR009060">
    <property type="entry name" value="UBA-like_sf"/>
</dbReference>
<dbReference type="PANTHER" id="PTHR11741">
    <property type="entry name" value="ELONGATION FACTOR TS"/>
    <property type="match status" value="1"/>
</dbReference>
<dbReference type="PANTHER" id="PTHR11741:SF0">
    <property type="entry name" value="ELONGATION FACTOR TS, MITOCHONDRIAL"/>
    <property type="match status" value="1"/>
</dbReference>
<dbReference type="Pfam" id="PF00889">
    <property type="entry name" value="EF_TS"/>
    <property type="match status" value="1"/>
</dbReference>
<dbReference type="SUPFAM" id="SSF54713">
    <property type="entry name" value="Elongation factor Ts (EF-Ts), dimerisation domain"/>
    <property type="match status" value="1"/>
</dbReference>
<dbReference type="SUPFAM" id="SSF46934">
    <property type="entry name" value="UBA-like"/>
    <property type="match status" value="1"/>
</dbReference>
<reference key="1">
    <citation type="journal article" date="2005" name="Science">
        <title>The genome sequence of Trypanosoma cruzi, etiologic agent of Chagas disease.</title>
        <authorList>
            <person name="El-Sayed N.M.A."/>
            <person name="Myler P.J."/>
            <person name="Bartholomeu D.C."/>
            <person name="Nilsson D."/>
            <person name="Aggarwal G."/>
            <person name="Tran A.-N."/>
            <person name="Ghedin E."/>
            <person name="Worthey E.A."/>
            <person name="Delcher A.L."/>
            <person name="Blandin G."/>
            <person name="Westenberger S.J."/>
            <person name="Caler E."/>
            <person name="Cerqueira G.C."/>
            <person name="Branche C."/>
            <person name="Haas B."/>
            <person name="Anupama A."/>
            <person name="Arner E."/>
            <person name="Aslund L."/>
            <person name="Attipoe P."/>
            <person name="Bontempi E."/>
            <person name="Bringaud F."/>
            <person name="Burton P."/>
            <person name="Cadag E."/>
            <person name="Campbell D.A."/>
            <person name="Carrington M."/>
            <person name="Crabtree J."/>
            <person name="Darban H."/>
            <person name="da Silveira J.F."/>
            <person name="de Jong P."/>
            <person name="Edwards K."/>
            <person name="Englund P.T."/>
            <person name="Fazelina G."/>
            <person name="Feldblyum T."/>
            <person name="Ferella M."/>
            <person name="Frasch A.C."/>
            <person name="Gull K."/>
            <person name="Horn D."/>
            <person name="Hou L."/>
            <person name="Huang Y."/>
            <person name="Kindlund E."/>
            <person name="Klingbeil M."/>
            <person name="Kluge S."/>
            <person name="Koo H."/>
            <person name="Lacerda D."/>
            <person name="Levin M.J."/>
            <person name="Lorenzi H."/>
            <person name="Louie T."/>
            <person name="Machado C.R."/>
            <person name="McCulloch R."/>
            <person name="McKenna A."/>
            <person name="Mizuno Y."/>
            <person name="Mottram J.C."/>
            <person name="Nelson S."/>
            <person name="Ochaya S."/>
            <person name="Osoegawa K."/>
            <person name="Pai G."/>
            <person name="Parsons M."/>
            <person name="Pentony M."/>
            <person name="Pettersson U."/>
            <person name="Pop M."/>
            <person name="Ramirez J.L."/>
            <person name="Rinta J."/>
            <person name="Robertson L."/>
            <person name="Salzberg S.L."/>
            <person name="Sanchez D.O."/>
            <person name="Seyler A."/>
            <person name="Sharma R."/>
            <person name="Shetty J."/>
            <person name="Simpson A.J."/>
            <person name="Sisk E."/>
            <person name="Tammi M.T."/>
            <person name="Tarleton R."/>
            <person name="Teixeira S."/>
            <person name="Van Aken S."/>
            <person name="Vogt C."/>
            <person name="Ward P.N."/>
            <person name="Wickstead B."/>
            <person name="Wortman J."/>
            <person name="White O."/>
            <person name="Fraser C.M."/>
            <person name="Stuart K.D."/>
            <person name="Andersson B."/>
        </authorList>
    </citation>
    <scope>NUCLEOTIDE SEQUENCE [LARGE SCALE GENOMIC DNA]</scope>
    <source>
        <strain>CL Brener</strain>
    </source>
</reference>
<evidence type="ECO:0000255" key="1">
    <source>
        <dbReference type="HAMAP-Rule" id="MF_03135"/>
    </source>
</evidence>
<accession>Q4D248</accession>
<comment type="function">
    <text evidence="1">Associates with the EF-Tu.GDP complex and induces the exchange of GDP to GTP. It remains bound to the aminoacyl-tRNA.EF-Tu.GTP complex up to the GTP hydrolysis stage on the ribosome.</text>
</comment>
<comment type="subcellular location">
    <subcellularLocation>
        <location evidence="1">Mitochondrion</location>
    </subcellularLocation>
</comment>
<comment type="miscellaneous">
    <text evidence="1">This protein may be expected to contain an N-terminal transit peptide but none has been predicted.</text>
</comment>
<comment type="similarity">
    <text evidence="1">Belongs to the EF-Ts family.</text>
</comment>
<gene>
    <name type="ORF">Tc00.1047053503811.60</name>
</gene>
<proteinExistence type="inferred from homology"/>